<evidence type="ECO:0000269" key="1">
    <source>
    </source>
</evidence>
<evidence type="ECO:0000269" key="2">
    <source>
    </source>
</evidence>
<evidence type="ECO:0000269" key="3">
    <source>
    </source>
</evidence>
<evidence type="ECO:0000269" key="4">
    <source>
    </source>
</evidence>
<evidence type="ECO:0000303" key="5">
    <source>
    </source>
</evidence>
<evidence type="ECO:0000303" key="6">
    <source>
    </source>
</evidence>
<evidence type="ECO:0000305" key="7"/>
<evidence type="ECO:0000305" key="8">
    <source>
    </source>
</evidence>
<evidence type="ECO:0000305" key="9">
    <source>
    </source>
</evidence>
<evidence type="ECO:0007744" key="10">
    <source>
    </source>
</evidence>
<sequence>MAGVKAYELRTKSKEQLASQLVDLKKELAELKVQKLSRPSLPKIKTVRKSIACVLTVINEQQREAVRQLYKGKKYQPKDLRAKKTRALRRALTKFEASQVTEKQRKKQIAFPQRKYAIKA</sequence>
<feature type="initiator methionine" description="Removed" evidence="1">
    <location>
        <position position="1"/>
    </location>
</feature>
<feature type="chain" id="PRO_0000410447" description="Large ribosomal subunit protein uL29B">
    <location>
        <begin position="2"/>
        <end position="120"/>
    </location>
</feature>
<feature type="modified residue" description="Phosphoserine" evidence="10">
    <location>
        <position position="13"/>
    </location>
</feature>
<feature type="modified residue" description="Phosphoserine" evidence="10">
    <location>
        <position position="50"/>
    </location>
</feature>
<keyword id="KW-0002">3D-structure</keyword>
<keyword id="KW-0963">Cytoplasm</keyword>
<keyword id="KW-0597">Phosphoprotein</keyword>
<keyword id="KW-1185">Reference proteome</keyword>
<keyword id="KW-0687">Ribonucleoprotein</keyword>
<keyword id="KW-0689">Ribosomal protein</keyword>
<organism>
    <name type="scientific">Saccharomyces cerevisiae (strain ATCC 204508 / S288c)</name>
    <name type="common">Baker's yeast</name>
    <dbReference type="NCBI Taxonomy" id="559292"/>
    <lineage>
        <taxon>Eukaryota</taxon>
        <taxon>Fungi</taxon>
        <taxon>Dikarya</taxon>
        <taxon>Ascomycota</taxon>
        <taxon>Saccharomycotina</taxon>
        <taxon>Saccharomycetes</taxon>
        <taxon>Saccharomycetales</taxon>
        <taxon>Saccharomycetaceae</taxon>
        <taxon>Saccharomyces</taxon>
    </lineage>
</organism>
<gene>
    <name evidence="6" type="primary">RPL35B</name>
    <name type="synonym">SOS2</name>
    <name type="ordered locus">YDL136W</name>
    <name type="ORF">D2170</name>
</gene>
<dbReference type="EMBL" id="L02328">
    <property type="protein sequence ID" value="AAA35000.1"/>
    <property type="molecule type" value="Genomic_DNA"/>
</dbReference>
<dbReference type="EMBL" id="X96876">
    <property type="protein sequence ID" value="CAA65623.1"/>
    <property type="molecule type" value="Genomic_DNA"/>
</dbReference>
<dbReference type="EMBL" id="Z74184">
    <property type="protein sequence ID" value="CAA98709.1"/>
    <property type="molecule type" value="Genomic_DNA"/>
</dbReference>
<dbReference type="EMBL" id="BK006938">
    <property type="protein sequence ID" value="DAA11672.1"/>
    <property type="molecule type" value="Genomic_DNA"/>
</dbReference>
<dbReference type="PIR" id="S30770">
    <property type="entry name" value="S30770"/>
</dbReference>
<dbReference type="RefSeq" id="NP_010090.1">
    <property type="nucleotide sequence ID" value="NM_001180251.2"/>
</dbReference>
<dbReference type="PDB" id="4V8Y">
    <property type="method" value="EM"/>
    <property type="resolution" value="4.30 A"/>
    <property type="chains" value="Bh=2-120"/>
</dbReference>
<dbReference type="PDB" id="4V8Z">
    <property type="method" value="EM"/>
    <property type="resolution" value="6.60 A"/>
    <property type="chains" value="Bh=2-120"/>
</dbReference>
<dbReference type="PDBsum" id="4V8Y"/>
<dbReference type="PDBsum" id="4V8Z"/>
<dbReference type="SMR" id="P0CX85"/>
<dbReference type="BioGRID" id="31854">
    <property type="interactions" value="352"/>
</dbReference>
<dbReference type="BioGRID" id="31925">
    <property type="interactions" value="262"/>
</dbReference>
<dbReference type="ComplexPortal" id="CPX-1601">
    <property type="entry name" value="60S cytosolic large ribosomal subunit"/>
</dbReference>
<dbReference type="FunCoup" id="P0CX85">
    <property type="interactions" value="930"/>
</dbReference>
<dbReference type="IntAct" id="P0CX85">
    <property type="interactions" value="41"/>
</dbReference>
<dbReference type="MINT" id="P0CX85"/>
<dbReference type="iPTMnet" id="P0CX85"/>
<dbReference type="EnsemblFungi" id="YDL136W_mRNA">
    <property type="protein sequence ID" value="YDL136W"/>
    <property type="gene ID" value="YDL136W"/>
</dbReference>
<dbReference type="EnsemblFungi" id="YDL191W_mRNA">
    <property type="protein sequence ID" value="YDL191W"/>
    <property type="gene ID" value="YDL191W"/>
</dbReference>
<dbReference type="GeneID" id="851419"/>
<dbReference type="KEGG" id="sce:YDL136W"/>
<dbReference type="KEGG" id="sce:YDL191W"/>
<dbReference type="AGR" id="SGD:S000002295"/>
<dbReference type="SGD" id="S000002295">
    <property type="gene designation" value="RPL35B"/>
</dbReference>
<dbReference type="VEuPathDB" id="FungiDB:YDL136W"/>
<dbReference type="VEuPathDB" id="FungiDB:YDL191W"/>
<dbReference type="GeneTree" id="ENSGT00390000016384"/>
<dbReference type="HOGENOM" id="CLU_110381_1_1_1"/>
<dbReference type="InParanoid" id="P0CX85"/>
<dbReference type="OMA" id="VMNQKAR"/>
<dbReference type="OrthoDB" id="528635at2759"/>
<dbReference type="BioCyc" id="YEAST:G3O-29535-MONOMER"/>
<dbReference type="Reactome" id="R-SCE-156827">
    <property type="pathway name" value="L13a-mediated translational silencing of Ceruloplasmin expression"/>
</dbReference>
<dbReference type="Reactome" id="R-SCE-1799339">
    <property type="pathway name" value="SRP-dependent cotranslational protein targeting to membrane"/>
</dbReference>
<dbReference type="Reactome" id="R-SCE-72689">
    <property type="pathway name" value="Formation of a pool of free 40S subunits"/>
</dbReference>
<dbReference type="Reactome" id="R-SCE-72706">
    <property type="pathway name" value="GTP hydrolysis and joining of the 60S ribosomal subunit"/>
</dbReference>
<dbReference type="Reactome" id="R-SCE-975956">
    <property type="pathway name" value="Nonsense Mediated Decay (NMD) independent of the Exon Junction Complex (EJC)"/>
</dbReference>
<dbReference type="Reactome" id="R-SCE-975957">
    <property type="pathway name" value="Nonsense Mediated Decay (NMD) enhanced by the Exon Junction Complex (EJC)"/>
</dbReference>
<dbReference type="PRO" id="PR:P0CX85"/>
<dbReference type="Proteomes" id="UP000002311">
    <property type="component" value="Chromosome IV"/>
</dbReference>
<dbReference type="RNAct" id="P0CX85">
    <property type="molecule type" value="protein"/>
</dbReference>
<dbReference type="ExpressionAtlas" id="P0CX85">
    <property type="expression patterns" value="baseline and differential"/>
</dbReference>
<dbReference type="GO" id="GO:0005829">
    <property type="term" value="C:cytosol"/>
    <property type="evidence" value="ECO:0000304"/>
    <property type="project" value="Reactome"/>
</dbReference>
<dbReference type="GO" id="GO:0022625">
    <property type="term" value="C:cytosolic large ribosomal subunit"/>
    <property type="evidence" value="ECO:0000314"/>
    <property type="project" value="SGD"/>
</dbReference>
<dbReference type="GO" id="GO:0030687">
    <property type="term" value="C:preribosome, large subunit precursor"/>
    <property type="evidence" value="ECO:0000314"/>
    <property type="project" value="SGD"/>
</dbReference>
<dbReference type="GO" id="GO:0003729">
    <property type="term" value="F:mRNA binding"/>
    <property type="evidence" value="ECO:0000318"/>
    <property type="project" value="GO_Central"/>
</dbReference>
<dbReference type="GO" id="GO:0003735">
    <property type="term" value="F:structural constituent of ribosome"/>
    <property type="evidence" value="ECO:0000318"/>
    <property type="project" value="GO_Central"/>
</dbReference>
<dbReference type="GO" id="GO:0002181">
    <property type="term" value="P:cytoplasmic translation"/>
    <property type="evidence" value="ECO:0000305"/>
    <property type="project" value="SGD"/>
</dbReference>
<dbReference type="GO" id="GO:0000463">
    <property type="term" value="P:maturation of LSU-rRNA from tricistronic rRNA transcript (SSU-rRNA, 5.8S rRNA, LSU-rRNA)"/>
    <property type="evidence" value="ECO:0000315"/>
    <property type="project" value="SGD"/>
</dbReference>
<dbReference type="CDD" id="cd00427">
    <property type="entry name" value="Ribosomal_L29_HIP"/>
    <property type="match status" value="1"/>
</dbReference>
<dbReference type="FunFam" id="1.10.287.310:FF:000002">
    <property type="entry name" value="60S ribosomal protein L35"/>
    <property type="match status" value="1"/>
</dbReference>
<dbReference type="FunFam" id="6.10.250.3450:FF:000001">
    <property type="entry name" value="60S ribosomal protein L35"/>
    <property type="match status" value="1"/>
</dbReference>
<dbReference type="Gene3D" id="1.10.287.310">
    <property type="match status" value="1"/>
</dbReference>
<dbReference type="Gene3D" id="6.10.250.3450">
    <property type="match status" value="1"/>
</dbReference>
<dbReference type="HAMAP" id="MF_00374">
    <property type="entry name" value="Ribosomal_uL29"/>
    <property type="match status" value="1"/>
</dbReference>
<dbReference type="InterPro" id="IPR001854">
    <property type="entry name" value="Ribosomal_uL29"/>
</dbReference>
<dbReference type="InterPro" id="IPR018254">
    <property type="entry name" value="Ribosomal_uL29_CS"/>
</dbReference>
<dbReference type="InterPro" id="IPR045059">
    <property type="entry name" value="Ribosomal_uL29_euk"/>
</dbReference>
<dbReference type="InterPro" id="IPR036049">
    <property type="entry name" value="Ribosomal_uL29_sf"/>
</dbReference>
<dbReference type="NCBIfam" id="TIGR00012">
    <property type="entry name" value="L29"/>
    <property type="match status" value="1"/>
</dbReference>
<dbReference type="PANTHER" id="PTHR45722">
    <property type="entry name" value="60S RIBOSOMAL PROTEIN L35"/>
    <property type="match status" value="1"/>
</dbReference>
<dbReference type="PANTHER" id="PTHR45722:SF2">
    <property type="entry name" value="LARGE RIBOSOMAL SUBUNIT PROTEIN UL29-RELATED"/>
    <property type="match status" value="1"/>
</dbReference>
<dbReference type="Pfam" id="PF00831">
    <property type="entry name" value="Ribosomal_L29"/>
    <property type="match status" value="1"/>
</dbReference>
<dbReference type="SUPFAM" id="SSF46561">
    <property type="entry name" value="Ribosomal protein L29 (L29p)"/>
    <property type="match status" value="1"/>
</dbReference>
<dbReference type="PROSITE" id="PS00579">
    <property type="entry name" value="RIBOSOMAL_L29"/>
    <property type="match status" value="1"/>
</dbReference>
<name>RL35B_YEAST</name>
<proteinExistence type="evidence at protein level"/>
<reference key="1">
    <citation type="journal article" date="1993" name="Cell">
        <title>The yeast SIS1 protein, a DnaJ homolog, is required for the initiation of translation.</title>
        <authorList>
            <person name="Zhong T."/>
            <person name="Arndt K.T."/>
        </authorList>
    </citation>
    <scope>NUCLEOTIDE SEQUENCE [GENOMIC DNA]</scope>
    <source>
        <strain>ATCC 204508 / S288c</strain>
    </source>
</reference>
<reference key="2">
    <citation type="journal article" date="1996" name="Yeast">
        <title>Analysis of a 26,756 bp segment from the left arm of yeast chromosome IV.</title>
        <authorList>
            <person name="Woelfl S."/>
            <person name="Haneman V."/>
            <person name="Saluz H.P."/>
        </authorList>
    </citation>
    <scope>NUCLEOTIDE SEQUENCE [GENOMIC DNA]</scope>
    <source>
        <strain>ATCC 96604 / S288c / FY1679</strain>
    </source>
</reference>
<reference key="3">
    <citation type="journal article" date="1997" name="Nature">
        <title>The nucleotide sequence of Saccharomyces cerevisiae chromosome IV.</title>
        <authorList>
            <person name="Jacq C."/>
            <person name="Alt-Moerbe J."/>
            <person name="Andre B."/>
            <person name="Arnold W."/>
            <person name="Bahr A."/>
            <person name="Ballesta J.P.G."/>
            <person name="Bargues M."/>
            <person name="Baron L."/>
            <person name="Becker A."/>
            <person name="Biteau N."/>
            <person name="Bloecker H."/>
            <person name="Blugeon C."/>
            <person name="Boskovic J."/>
            <person name="Brandt P."/>
            <person name="Brueckner M."/>
            <person name="Buitrago M.J."/>
            <person name="Coster F."/>
            <person name="Delaveau T."/>
            <person name="del Rey F."/>
            <person name="Dujon B."/>
            <person name="Eide L.G."/>
            <person name="Garcia-Cantalejo J.M."/>
            <person name="Goffeau A."/>
            <person name="Gomez-Peris A."/>
            <person name="Granotier C."/>
            <person name="Hanemann V."/>
            <person name="Hankeln T."/>
            <person name="Hoheisel J.D."/>
            <person name="Jaeger W."/>
            <person name="Jimenez A."/>
            <person name="Jonniaux J.-L."/>
            <person name="Kraemer C."/>
            <person name="Kuester H."/>
            <person name="Laamanen P."/>
            <person name="Legros Y."/>
            <person name="Louis E.J."/>
            <person name="Moeller-Rieker S."/>
            <person name="Monnet A."/>
            <person name="Moro M."/>
            <person name="Mueller-Auer S."/>
            <person name="Nussbaumer B."/>
            <person name="Paricio N."/>
            <person name="Paulin L."/>
            <person name="Perea J."/>
            <person name="Perez-Alonso M."/>
            <person name="Perez-Ortin J.E."/>
            <person name="Pohl T.M."/>
            <person name="Prydz H."/>
            <person name="Purnelle B."/>
            <person name="Rasmussen S.W."/>
            <person name="Remacha M.A."/>
            <person name="Revuelta J.L."/>
            <person name="Rieger M."/>
            <person name="Salom D."/>
            <person name="Saluz H.P."/>
            <person name="Saiz J.E."/>
            <person name="Saren A.-M."/>
            <person name="Schaefer M."/>
            <person name="Scharfe M."/>
            <person name="Schmidt E.R."/>
            <person name="Schneider C."/>
            <person name="Scholler P."/>
            <person name="Schwarz S."/>
            <person name="Soler-Mira A."/>
            <person name="Urrestarazu L.A."/>
            <person name="Verhasselt P."/>
            <person name="Vissers S."/>
            <person name="Voet M."/>
            <person name="Volckaert G."/>
            <person name="Wagner G."/>
            <person name="Wambutt R."/>
            <person name="Wedler E."/>
            <person name="Wedler H."/>
            <person name="Woelfl S."/>
            <person name="Harris D.E."/>
            <person name="Bowman S."/>
            <person name="Brown D."/>
            <person name="Churcher C.M."/>
            <person name="Connor R."/>
            <person name="Dedman K."/>
            <person name="Gentles S."/>
            <person name="Hamlin N."/>
            <person name="Hunt S."/>
            <person name="Jones L."/>
            <person name="McDonald S."/>
            <person name="Murphy L.D."/>
            <person name="Niblett D."/>
            <person name="Odell C."/>
            <person name="Oliver K."/>
            <person name="Rajandream M.A."/>
            <person name="Richards C."/>
            <person name="Shore L."/>
            <person name="Walsh S.V."/>
            <person name="Barrell B.G."/>
            <person name="Dietrich F.S."/>
            <person name="Mulligan J.T."/>
            <person name="Allen E."/>
            <person name="Araujo R."/>
            <person name="Aviles E."/>
            <person name="Berno A."/>
            <person name="Carpenter J."/>
            <person name="Chen E."/>
            <person name="Cherry J.M."/>
            <person name="Chung E."/>
            <person name="Duncan M."/>
            <person name="Hunicke-Smith S."/>
            <person name="Hyman R.W."/>
            <person name="Komp C."/>
            <person name="Lashkari D."/>
            <person name="Lew H."/>
            <person name="Lin D."/>
            <person name="Mosedale D."/>
            <person name="Nakahara K."/>
            <person name="Namath A."/>
            <person name="Oefner P."/>
            <person name="Oh C."/>
            <person name="Petel F.X."/>
            <person name="Roberts D."/>
            <person name="Schramm S."/>
            <person name="Schroeder M."/>
            <person name="Shogren T."/>
            <person name="Shroff N."/>
            <person name="Winant A."/>
            <person name="Yelton M.A."/>
            <person name="Botstein D."/>
            <person name="Davis R.W."/>
            <person name="Johnston M."/>
            <person name="Andrews S."/>
            <person name="Brinkman R."/>
            <person name="Cooper J."/>
            <person name="Ding H."/>
            <person name="Du Z."/>
            <person name="Favello A."/>
            <person name="Fulton L."/>
            <person name="Gattung S."/>
            <person name="Greco T."/>
            <person name="Hallsworth K."/>
            <person name="Hawkins J."/>
            <person name="Hillier L.W."/>
            <person name="Jier M."/>
            <person name="Johnson D."/>
            <person name="Johnston L."/>
            <person name="Kirsten J."/>
            <person name="Kucaba T."/>
            <person name="Langston Y."/>
            <person name="Latreille P."/>
            <person name="Le T."/>
            <person name="Mardis E."/>
            <person name="Menezes S."/>
            <person name="Miller N."/>
            <person name="Nhan M."/>
            <person name="Pauley A."/>
            <person name="Peluso D."/>
            <person name="Rifkin L."/>
            <person name="Riles L."/>
            <person name="Taich A."/>
            <person name="Trevaskis E."/>
            <person name="Vignati D."/>
            <person name="Wilcox L."/>
            <person name="Wohldman P."/>
            <person name="Vaudin M."/>
            <person name="Wilson R."/>
            <person name="Waterston R."/>
            <person name="Albermann K."/>
            <person name="Hani J."/>
            <person name="Heumann K."/>
            <person name="Kleine K."/>
            <person name="Mewes H.-W."/>
            <person name="Zollner A."/>
            <person name="Zaccaria P."/>
        </authorList>
    </citation>
    <scope>NUCLEOTIDE SEQUENCE [LARGE SCALE GENOMIC DNA]</scope>
    <source>
        <strain>ATCC 204508 / S288c</strain>
    </source>
</reference>
<reference key="4">
    <citation type="journal article" date="2014" name="G3 (Bethesda)">
        <title>The reference genome sequence of Saccharomyces cerevisiae: Then and now.</title>
        <authorList>
            <person name="Engel S.R."/>
            <person name="Dietrich F.S."/>
            <person name="Fisk D.G."/>
            <person name="Binkley G."/>
            <person name="Balakrishnan R."/>
            <person name="Costanzo M.C."/>
            <person name="Dwight S.S."/>
            <person name="Hitz B.C."/>
            <person name="Karra K."/>
            <person name="Nash R.S."/>
            <person name="Weng S."/>
            <person name="Wong E.D."/>
            <person name="Lloyd P."/>
            <person name="Skrzypek M.S."/>
            <person name="Miyasato S.R."/>
            <person name="Simison M."/>
            <person name="Cherry J.M."/>
        </authorList>
    </citation>
    <scope>GENOME REANNOTATION</scope>
    <source>
        <strain>ATCC 204508 / S288c</strain>
    </source>
</reference>
<reference key="5">
    <citation type="journal article" date="1998" name="Yeast">
        <title>The list of cytoplasmic ribosomal proteins of Saccharomyces cerevisiae.</title>
        <authorList>
            <person name="Planta R.J."/>
            <person name="Mager W.H."/>
        </authorList>
    </citation>
    <scope>NOMENCLATURE</scope>
    <scope>SUBUNIT</scope>
</reference>
<reference key="6">
    <citation type="journal article" date="2002" name="Proc. Natl. Acad. Sci. U.S.A.">
        <title>Direct mass spectrometric analysis of intact proteins of the yeast large ribosomal subunit using capillary LC/FTICR.</title>
        <authorList>
            <person name="Lee S.-W."/>
            <person name="Berger S.J."/>
            <person name="Martinovic S."/>
            <person name="Pasa-Tolic L."/>
            <person name="Anderson G.A."/>
            <person name="Shen Y."/>
            <person name="Zhao R."/>
            <person name="Smith R.D."/>
        </authorList>
    </citation>
    <scope>MASS SPECTROMETRY</scope>
    <scope>CLEAVAGE OF INITIATOR METHIONINE</scope>
</reference>
<reference key="7">
    <citation type="journal article" date="2003" name="Nature">
        <title>Global analysis of protein localization in budding yeast.</title>
        <authorList>
            <person name="Huh W.-K."/>
            <person name="Falvo J.V."/>
            <person name="Gerke L.C."/>
            <person name="Carroll A.S."/>
            <person name="Howson R.W."/>
            <person name="Weissman J.S."/>
            <person name="O'Shea E.K."/>
        </authorList>
    </citation>
    <scope>SUBCELLULAR LOCATION [LARGE SCALE ANALYSIS]</scope>
</reference>
<reference key="8">
    <citation type="journal article" date="2003" name="Nature">
        <title>Global analysis of protein expression in yeast.</title>
        <authorList>
            <person name="Ghaemmaghami S."/>
            <person name="Huh W.-K."/>
            <person name="Bower K."/>
            <person name="Howson R.W."/>
            <person name="Belle A."/>
            <person name="Dephoure N."/>
            <person name="O'Shea E.K."/>
            <person name="Weissman J.S."/>
        </authorList>
    </citation>
    <scope>LEVEL OF PROTEIN EXPRESSION [LARGE SCALE ANALYSIS]</scope>
</reference>
<reference key="9">
    <citation type="journal article" date="2009" name="Science">
        <title>Global analysis of Cdk1 substrate phosphorylation sites provides insights into evolution.</title>
        <authorList>
            <person name="Holt L.J."/>
            <person name="Tuch B.B."/>
            <person name="Villen J."/>
            <person name="Johnson A.D."/>
            <person name="Gygi S.P."/>
            <person name="Morgan D.O."/>
        </authorList>
    </citation>
    <scope>PHOSPHORYLATION [LARGE SCALE ANALYSIS] AT SER-13 AND SER-50</scope>
    <scope>IDENTIFICATION BY MASS SPECTROMETRY [LARGE SCALE ANALYSIS]</scope>
</reference>
<reference key="10">
    <citation type="journal article" date="2011" name="Science">
        <title>The structure of the eukaryotic ribosome at 3.0 A resolution.</title>
        <authorList>
            <person name="Ben-Shem A."/>
            <person name="Garreau de Loubresse N."/>
            <person name="Melnikov S."/>
            <person name="Jenner L."/>
            <person name="Yusupova G."/>
            <person name="Yusupov M."/>
        </authorList>
    </citation>
    <scope>SUBUNIT</scope>
    <scope>SUBCELLULAR LOCATION</scope>
</reference>
<reference key="11">
    <citation type="journal article" date="2012" name="Proc. Natl. Acad. Sci. U.S.A.">
        <title>N-terminal acetylome analyses and functional insights of the N-terminal acetyltransferase NatB.</title>
        <authorList>
            <person name="Van Damme P."/>
            <person name="Lasa M."/>
            <person name="Polevoda B."/>
            <person name="Gazquez C."/>
            <person name="Elosegui-Artola A."/>
            <person name="Kim D.S."/>
            <person name="De Juan-Pardo E."/>
            <person name="Demeyer K."/>
            <person name="Hole K."/>
            <person name="Larrea E."/>
            <person name="Timmerman E."/>
            <person name="Prieto J."/>
            <person name="Arnesen T."/>
            <person name="Sherman F."/>
            <person name="Gevaert K."/>
            <person name="Aldabe R."/>
        </authorList>
    </citation>
    <scope>IDENTIFICATION BY MASS SPECTROMETRY [LARGE SCALE ANALYSIS]</scope>
</reference>
<reference key="12">
    <citation type="journal article" date="2014" name="Curr. Opin. Struct. Biol.">
        <title>A new system for naming ribosomal proteins.</title>
        <authorList>
            <person name="Ban N."/>
            <person name="Beckmann R."/>
            <person name="Cate J.H.D."/>
            <person name="Dinman J.D."/>
            <person name="Dragon F."/>
            <person name="Ellis S.R."/>
            <person name="Lafontaine D.L.J."/>
            <person name="Lindahl L."/>
            <person name="Liljas A."/>
            <person name="Lipton J.M."/>
            <person name="McAlear M.A."/>
            <person name="Moore P.B."/>
            <person name="Noller H.F."/>
            <person name="Ortega J."/>
            <person name="Panse V.G."/>
            <person name="Ramakrishnan V."/>
            <person name="Spahn C.M.T."/>
            <person name="Steitz T.A."/>
            <person name="Tchorzewski M."/>
            <person name="Tollervey D."/>
            <person name="Warren A.J."/>
            <person name="Williamson J.R."/>
            <person name="Wilson D."/>
            <person name="Yonath A."/>
            <person name="Yusupov M."/>
        </authorList>
    </citation>
    <scope>NOMENCLATURE</scope>
</reference>
<reference key="13">
    <citation type="journal article" date="2001" name="Cell">
        <title>Structure of the 80S ribosome from Saccharomyces cerevisiae -- tRNA-ribosome and subunit-subunit interactions.</title>
        <authorList>
            <person name="Spahn C.M.T."/>
            <person name="Beckmann R."/>
            <person name="Eswar N."/>
            <person name="Penczek P.A."/>
            <person name="Sali A."/>
            <person name="Blobel G."/>
            <person name="Frank J."/>
        </authorList>
    </citation>
    <scope>3D-STRUCTURE MODELING OF 2-60</scope>
    <scope>ELECTRON MICROSCOPY</scope>
</reference>
<reference key="14">
    <citation type="journal article" date="2004" name="EMBO J.">
        <title>Domain movements of elongation factor eEF2 and the eukaryotic 80S ribosome facilitate tRNA translocation.</title>
        <authorList>
            <person name="Spahn C.M.T."/>
            <person name="Gomez-Lorenzo M.G."/>
            <person name="Grassucci R.A."/>
            <person name="Joergensen R."/>
            <person name="Andersen G.R."/>
            <person name="Beckmann R."/>
            <person name="Penczek P.A."/>
            <person name="Ballesta J.P.G."/>
            <person name="Frank J."/>
        </authorList>
    </citation>
    <scope>3D-STRUCTURE MODELING</scope>
    <scope>ELECTRON MICROSCOPY</scope>
</reference>
<protein>
    <recommendedName>
        <fullName evidence="5">Large ribosomal subunit protein uL29B</fullName>
    </recommendedName>
    <alternativeName>
        <fullName evidence="6">60S ribosomal protein L35-B</fullName>
    </alternativeName>
</protein>
<comment type="function">
    <text evidence="8">Component of the ribosome, a large ribonucleoprotein complex responsible for the synthesis of proteins in the cell. The small ribosomal subunit (SSU) binds messenger RNAs (mRNAs) and translates the encoded message by selecting cognate aminoacyl-transfer RNA (tRNA) molecules. The large subunit (LSU) contains the ribosomal catalytic site termed the peptidyl transferase center (PTC), which catalyzes the formation of peptide bonds, thereby polymerizing the amino acids delivered by tRNAs into a polypeptide chain. The nascent polypeptides leave the ribosome through a tunnel in the LSU and interact with protein factors that function in enzymatic processing, targeting, and the membrane insertion of nascent chains at the exit of the ribosomal tunnel.</text>
</comment>
<comment type="subunit">
    <text evidence="4 9">Component of the large ribosomal subunit (LSU). Mature yeast ribosomes consist of a small (40S) and a large (60S) subunit. The 40S small subunit contains 1 molecule of ribosomal RNA (18S rRNA) and 33 different proteins (encoded by 57 genes). The large 60S subunit contains 3 rRNA molecules (25S, 5.8S and 5S rRNA) and 46 different proteins (encoded by 81 genes). uL29 is associated with the polypeptide exit tunnel (PubMed:22096102, PubMed:9559554).</text>
</comment>
<comment type="subcellular location">
    <subcellularLocation>
        <location evidence="2 4">Cytoplasm</location>
    </subcellularLocation>
</comment>
<comment type="mass spectrometry">
    <text>Monoisotopic mass.</text>
</comment>
<comment type="miscellaneous">
    <text evidence="3">Present with 19100 molecules/cell in log phase SD medium.</text>
</comment>
<comment type="miscellaneous">
    <text evidence="7">There are 2 genes for uL29 in yeast.</text>
</comment>
<comment type="similarity">
    <text evidence="7">Belongs to the universal ribosomal protein uL29 family.</text>
</comment>
<accession>P0CX85</accession>
<accession>D6VRG2</accession>
<accession>P39741</accession>
<accession>P39930</accession>